<proteinExistence type="inferred from homology"/>
<reference key="1">
    <citation type="journal article" date="1999" name="Mol. Microbiol.">
        <title>Identification and molecular characterization of a novel Salmonella enteritidis pathogenicity islet encoding an ABC transporter.</title>
        <authorList>
            <person name="Pattery T."/>
            <person name="Hernalsteens J.-P."/>
            <person name="De Greve H."/>
        </authorList>
    </citation>
    <scope>NUCLEOTIDE SEQUENCE [GENOMIC DNA]</scope>
    <source>
        <strain>S1400</strain>
    </source>
</reference>
<accession>Q9S4Y8</accession>
<organism>
    <name type="scientific">Salmonella enteritidis</name>
    <dbReference type="NCBI Taxonomy" id="149539"/>
    <lineage>
        <taxon>Bacteria</taxon>
        <taxon>Pseudomonadati</taxon>
        <taxon>Pseudomonadota</taxon>
        <taxon>Gammaproteobacteria</taxon>
        <taxon>Enterobacterales</taxon>
        <taxon>Enterobacteriaceae</taxon>
        <taxon>Salmonella</taxon>
    </lineage>
</organism>
<evidence type="ECO:0000255" key="1">
    <source>
        <dbReference type="HAMAP-Rule" id="MF_01622"/>
    </source>
</evidence>
<gene>
    <name evidence="1" type="primary">selU</name>
</gene>
<feature type="chain" id="PRO_0000210872" description="tRNA 2-selenouridine synthase">
    <location>
        <begin position="1"/>
        <end position="364"/>
    </location>
</feature>
<feature type="domain" description="Rhodanese" evidence="1">
    <location>
        <begin position="14"/>
        <end position="137"/>
    </location>
</feature>
<feature type="active site" description="S-selanylcysteine intermediate" evidence="1">
    <location>
        <position position="97"/>
    </location>
</feature>
<keyword id="KW-0711">Selenium</keyword>
<keyword id="KW-0808">Transferase</keyword>
<comment type="function">
    <text evidence="1">Involved in the post-transcriptional modification of the uridine at the wobble position (U34) of tRNA(Lys), tRNA(Glu) and tRNA(Gln). Catalyzes the conversion of 2-thiouridine (S2U-RNA) to 2-selenouridine (Se2U-RNA). Acts in a two-step process involving geranylation of 2-thiouridine (S2U) to S-geranyl-2-thiouridine (geS2U) and subsequent selenation of the latter derivative to 2-selenouridine (Se2U) in the tRNA chain.</text>
</comment>
<comment type="catalytic activity">
    <reaction evidence="1">
        <text>5-methylaminomethyl-2-thiouridine(34) in tRNA + selenophosphate + (2E)-geranyl diphosphate + H2O + H(+) = 5-methylaminomethyl-2-selenouridine(34) in tRNA + (2E)-thiogeraniol + phosphate + diphosphate</text>
        <dbReference type="Rhea" id="RHEA:42716"/>
        <dbReference type="Rhea" id="RHEA-COMP:10195"/>
        <dbReference type="Rhea" id="RHEA-COMP:10196"/>
        <dbReference type="ChEBI" id="CHEBI:15377"/>
        <dbReference type="ChEBI" id="CHEBI:15378"/>
        <dbReference type="ChEBI" id="CHEBI:16144"/>
        <dbReference type="ChEBI" id="CHEBI:33019"/>
        <dbReference type="ChEBI" id="CHEBI:43474"/>
        <dbReference type="ChEBI" id="CHEBI:58057"/>
        <dbReference type="ChEBI" id="CHEBI:74455"/>
        <dbReference type="ChEBI" id="CHEBI:82743"/>
        <dbReference type="ChEBI" id="CHEBI:143703"/>
        <dbReference type="EC" id="2.9.1.3"/>
    </reaction>
    <physiologicalReaction direction="left-to-right" evidence="1">
        <dbReference type="Rhea" id="RHEA:42717"/>
    </physiologicalReaction>
</comment>
<comment type="catalytic activity">
    <reaction evidence="1">
        <text>5-methylaminomethyl-2-thiouridine(34) in tRNA + (2E)-geranyl diphosphate = 5-methylaminomethyl-S-(2E)-geranyl-thiouridine(34) in tRNA + diphosphate</text>
        <dbReference type="Rhea" id="RHEA:14085"/>
        <dbReference type="Rhea" id="RHEA-COMP:10195"/>
        <dbReference type="Rhea" id="RHEA-COMP:14654"/>
        <dbReference type="ChEBI" id="CHEBI:33019"/>
        <dbReference type="ChEBI" id="CHEBI:58057"/>
        <dbReference type="ChEBI" id="CHEBI:74455"/>
        <dbReference type="ChEBI" id="CHEBI:140632"/>
    </reaction>
    <physiologicalReaction direction="left-to-right" evidence="1">
        <dbReference type="Rhea" id="RHEA:14086"/>
    </physiologicalReaction>
</comment>
<comment type="catalytic activity">
    <reaction evidence="1">
        <text>5-methylaminomethyl-S-(2E)-geranyl-thiouridine(34) in tRNA + selenophosphate + H(+) = 5-methylaminomethyl-2-(Se-phospho)selenouridine(34) in tRNA + (2E)-thiogeraniol</text>
        <dbReference type="Rhea" id="RHEA:60172"/>
        <dbReference type="Rhea" id="RHEA-COMP:14654"/>
        <dbReference type="Rhea" id="RHEA-COMP:15523"/>
        <dbReference type="ChEBI" id="CHEBI:15378"/>
        <dbReference type="ChEBI" id="CHEBI:16144"/>
        <dbReference type="ChEBI" id="CHEBI:140632"/>
        <dbReference type="ChEBI" id="CHEBI:143702"/>
        <dbReference type="ChEBI" id="CHEBI:143703"/>
    </reaction>
    <physiologicalReaction direction="left-to-right" evidence="1">
        <dbReference type="Rhea" id="RHEA:60173"/>
    </physiologicalReaction>
</comment>
<comment type="catalytic activity">
    <reaction evidence="1">
        <text>5-methylaminomethyl-2-(Se-phospho)selenouridine(34) in tRNA + H2O = 5-methylaminomethyl-2-selenouridine(34) in tRNA + phosphate</text>
        <dbReference type="Rhea" id="RHEA:60176"/>
        <dbReference type="Rhea" id="RHEA-COMP:10196"/>
        <dbReference type="Rhea" id="RHEA-COMP:15523"/>
        <dbReference type="ChEBI" id="CHEBI:15377"/>
        <dbReference type="ChEBI" id="CHEBI:43474"/>
        <dbReference type="ChEBI" id="CHEBI:82743"/>
        <dbReference type="ChEBI" id="CHEBI:143702"/>
    </reaction>
    <physiologicalReaction direction="left-to-right" evidence="1">
        <dbReference type="Rhea" id="RHEA:60177"/>
    </physiologicalReaction>
</comment>
<comment type="subunit">
    <text evidence="1">Monomer.</text>
</comment>
<comment type="similarity">
    <text evidence="1">Belongs to the SelU family.</text>
</comment>
<dbReference type="EC" id="2.9.1.3" evidence="1"/>
<dbReference type="EMBL" id="AF102556">
    <property type="protein sequence ID" value="AAD51882.1"/>
    <property type="molecule type" value="Genomic_DNA"/>
</dbReference>
<dbReference type="SMR" id="Q9S4Y8"/>
<dbReference type="GO" id="GO:0016765">
    <property type="term" value="F:transferase activity, transferring alkyl or aryl (other than methyl) groups"/>
    <property type="evidence" value="ECO:0007669"/>
    <property type="project" value="UniProtKB-UniRule"/>
</dbReference>
<dbReference type="GO" id="GO:0043828">
    <property type="term" value="F:tRNA 2-selenouridine synthase activity"/>
    <property type="evidence" value="ECO:0007669"/>
    <property type="project" value="UniProtKB-EC"/>
</dbReference>
<dbReference type="GO" id="GO:0002098">
    <property type="term" value="P:tRNA wobble uridine modification"/>
    <property type="evidence" value="ECO:0007669"/>
    <property type="project" value="UniProtKB-UniRule"/>
</dbReference>
<dbReference type="CDD" id="cd01520">
    <property type="entry name" value="RHOD_YbbB"/>
    <property type="match status" value="1"/>
</dbReference>
<dbReference type="FunFam" id="3.40.250.10:FF:000009">
    <property type="entry name" value="tRNA 2-selenouridine/geranyl-2-thiouridine synthase"/>
    <property type="match status" value="1"/>
</dbReference>
<dbReference type="Gene3D" id="3.40.250.10">
    <property type="entry name" value="Rhodanese-like domain"/>
    <property type="match status" value="1"/>
</dbReference>
<dbReference type="HAMAP" id="MF_01622">
    <property type="entry name" value="tRNA_sel_U_synth"/>
    <property type="match status" value="1"/>
</dbReference>
<dbReference type="InterPro" id="IPR001763">
    <property type="entry name" value="Rhodanese-like_dom"/>
</dbReference>
<dbReference type="InterPro" id="IPR036873">
    <property type="entry name" value="Rhodanese-like_dom_sf"/>
</dbReference>
<dbReference type="InterPro" id="IPR017582">
    <property type="entry name" value="SelU"/>
</dbReference>
<dbReference type="NCBIfam" id="NF008749">
    <property type="entry name" value="PRK11784.1-1"/>
    <property type="match status" value="1"/>
</dbReference>
<dbReference type="NCBIfam" id="NF008751">
    <property type="entry name" value="PRK11784.1-3"/>
    <property type="match status" value="1"/>
</dbReference>
<dbReference type="NCBIfam" id="TIGR03167">
    <property type="entry name" value="tRNA_sel_U_synt"/>
    <property type="match status" value="1"/>
</dbReference>
<dbReference type="PANTHER" id="PTHR30401">
    <property type="entry name" value="TRNA 2-SELENOURIDINE SYNTHASE"/>
    <property type="match status" value="1"/>
</dbReference>
<dbReference type="PANTHER" id="PTHR30401:SF0">
    <property type="entry name" value="TRNA 2-SELENOURIDINE SYNTHASE"/>
    <property type="match status" value="1"/>
</dbReference>
<dbReference type="Pfam" id="PF00581">
    <property type="entry name" value="Rhodanese"/>
    <property type="match status" value="1"/>
</dbReference>
<dbReference type="SMART" id="SM00450">
    <property type="entry name" value="RHOD"/>
    <property type="match status" value="1"/>
</dbReference>
<dbReference type="SUPFAM" id="SSF52821">
    <property type="entry name" value="Rhodanese/Cell cycle control phosphatase"/>
    <property type="match status" value="1"/>
</dbReference>
<dbReference type="PROSITE" id="PS50206">
    <property type="entry name" value="RHODANESE_3"/>
    <property type="match status" value="1"/>
</dbReference>
<name>SELU_SALEN</name>
<sequence>MQDRQKAQDYRALLLADTPLIDVRAPIEFEQGAMPGAINLPLMMDDERAAVGTCYKRQGADAALALGHRLVCGDIDQQRLEAWKAAYQRFPNGYLCCARGGQRSHIVQRWLQETGIDCPLIEGGYKALRQTAIQATWQLAQKPILLIGGCTGSGKTQLVRQQPNGVDLEGLARHRGSSFGRTLNPQLSQASFENKLAVELLKINARQTLKRWVLEDEGRTIGANHLPECLRERMAQAPIAVVEDPFALRLERLREEYFIRMHHDFTHAYGDEAGWQAYSKYLHHGLFAIRRRLGLQRFAELTDTLDRALAEQLSSGSTDGHMAWLVPLLNEYYDPMYRYQLEKKAANIVFRGTWQEVANWLKAQ</sequence>
<protein>
    <recommendedName>
        <fullName evidence="1">tRNA 2-selenouridine synthase</fullName>
        <ecNumber evidence="1">2.9.1.3</ecNumber>
    </recommendedName>
</protein>